<reference key="1">
    <citation type="journal article" date="2006" name="Nat. Biotechnol.">
        <title>Genome sequence of the ubiquitous hydrocarbon-degrading marine bacterium Alcanivorax borkumensis.</title>
        <authorList>
            <person name="Schneiker S."/>
            <person name="Martins dos Santos V.A.P."/>
            <person name="Bartels D."/>
            <person name="Bekel T."/>
            <person name="Brecht M."/>
            <person name="Buhrmester J."/>
            <person name="Chernikova T.N."/>
            <person name="Denaro R."/>
            <person name="Ferrer M."/>
            <person name="Gertler C."/>
            <person name="Goesmann A."/>
            <person name="Golyshina O.V."/>
            <person name="Kaminski F."/>
            <person name="Khachane A.N."/>
            <person name="Lang S."/>
            <person name="Linke B."/>
            <person name="McHardy A.C."/>
            <person name="Meyer F."/>
            <person name="Nechitaylo T."/>
            <person name="Puehler A."/>
            <person name="Regenhardt D."/>
            <person name="Rupp O."/>
            <person name="Sabirova J.S."/>
            <person name="Selbitschka W."/>
            <person name="Yakimov M.M."/>
            <person name="Timmis K.N."/>
            <person name="Vorhoelter F.-J."/>
            <person name="Weidner S."/>
            <person name="Kaiser O."/>
            <person name="Golyshin P.N."/>
        </authorList>
    </citation>
    <scope>NUCLEOTIDE SEQUENCE [LARGE SCALE GENOMIC DNA]</scope>
    <source>
        <strain>ATCC 700651 / DSM 11573 / NCIMB 13689 / SK2</strain>
    </source>
</reference>
<evidence type="ECO:0000255" key="1">
    <source>
        <dbReference type="HAMAP-Rule" id="MF_00123"/>
    </source>
</evidence>
<name>SYR_ALCBS</name>
<keyword id="KW-0030">Aminoacyl-tRNA synthetase</keyword>
<keyword id="KW-0067">ATP-binding</keyword>
<keyword id="KW-0963">Cytoplasm</keyword>
<keyword id="KW-0436">Ligase</keyword>
<keyword id="KW-0547">Nucleotide-binding</keyword>
<keyword id="KW-0648">Protein biosynthesis</keyword>
<keyword id="KW-1185">Reference proteome</keyword>
<organism>
    <name type="scientific">Alcanivorax borkumensis (strain ATCC 700651 / DSM 11573 / NCIMB 13689 / SK2)</name>
    <dbReference type="NCBI Taxonomy" id="393595"/>
    <lineage>
        <taxon>Bacteria</taxon>
        <taxon>Pseudomonadati</taxon>
        <taxon>Pseudomonadota</taxon>
        <taxon>Gammaproteobacteria</taxon>
        <taxon>Oceanospirillales</taxon>
        <taxon>Alcanivoracaceae</taxon>
        <taxon>Alcanivorax</taxon>
    </lineage>
</organism>
<gene>
    <name evidence="1" type="primary">argS</name>
    <name type="ordered locus">ABO_2242</name>
</gene>
<accession>Q0VMA8</accession>
<sequence length="584" mass="64882">MKERLISLIESALDTLITDGTLPADAKRPVQIDRTRDKSHGDFATNIALMLAKPAGMKPRDLAEKLIAALPNDSAVAKVDIAGPGFINFFQADDWLTGLLDSALADDFLGISRPEQPQTVVVDYSSPNLAKEMHVGHLRSTIIGDAVVRTLEFLGHTVIRQNHVGDWGTQFGMLLAYLEEQKTEEGERELSRELANLETFYRAAKQRFDESDSFADRARALVVKLQSGDDYCLTLWAEFNQVSLSHCQAIYDRLGVSLTPADVHGESAYNDDLAQVVADLDSKGLLSESQGAQCVFMDAFKNKEGEPLPVIVRKADGGYLYATSDLAALRYRASTLRADRMLYFVDQRQALHFQQMFTLAKLAGFVPEQTELAHMGFGTMNGPDGRPFKTRDGGTVKLVDLLDEAEQRAFALVQEKNPQLDDEELRNIARSVGIGAVKYADLSKNRSSDYIFNFEQMLSFEGNTAPYLLYAYTRVASVFRKAELDMANVSGDFLLNEDAEHTLAARLVQFGEVLQNVADKGQPHLLSAYLYDVAGLFSSFYEHCPILSSEDERIRQSRLKLAALTARTLKHGMELLGLSPLERM</sequence>
<proteinExistence type="inferred from homology"/>
<protein>
    <recommendedName>
        <fullName evidence="1">Arginine--tRNA ligase</fullName>
        <ecNumber evidence="1">6.1.1.19</ecNumber>
    </recommendedName>
    <alternativeName>
        <fullName evidence="1">Arginyl-tRNA synthetase</fullName>
        <shortName evidence="1">ArgRS</shortName>
    </alternativeName>
</protein>
<feature type="chain" id="PRO_1000017983" description="Arginine--tRNA ligase">
    <location>
        <begin position="1"/>
        <end position="584"/>
    </location>
</feature>
<feature type="short sequence motif" description="'HIGH' region">
    <location>
        <begin position="127"/>
        <end position="137"/>
    </location>
</feature>
<comment type="catalytic activity">
    <reaction evidence="1">
        <text>tRNA(Arg) + L-arginine + ATP = L-arginyl-tRNA(Arg) + AMP + diphosphate</text>
        <dbReference type="Rhea" id="RHEA:20301"/>
        <dbReference type="Rhea" id="RHEA-COMP:9658"/>
        <dbReference type="Rhea" id="RHEA-COMP:9673"/>
        <dbReference type="ChEBI" id="CHEBI:30616"/>
        <dbReference type="ChEBI" id="CHEBI:32682"/>
        <dbReference type="ChEBI" id="CHEBI:33019"/>
        <dbReference type="ChEBI" id="CHEBI:78442"/>
        <dbReference type="ChEBI" id="CHEBI:78513"/>
        <dbReference type="ChEBI" id="CHEBI:456215"/>
        <dbReference type="EC" id="6.1.1.19"/>
    </reaction>
</comment>
<comment type="subunit">
    <text evidence="1">Monomer.</text>
</comment>
<comment type="subcellular location">
    <subcellularLocation>
        <location evidence="1">Cytoplasm</location>
    </subcellularLocation>
</comment>
<comment type="similarity">
    <text evidence="1">Belongs to the class-I aminoacyl-tRNA synthetase family.</text>
</comment>
<dbReference type="EC" id="6.1.1.19" evidence="1"/>
<dbReference type="EMBL" id="AM286690">
    <property type="protein sequence ID" value="CAL17690.1"/>
    <property type="molecule type" value="Genomic_DNA"/>
</dbReference>
<dbReference type="RefSeq" id="WP_011589518.1">
    <property type="nucleotide sequence ID" value="NC_008260.1"/>
</dbReference>
<dbReference type="SMR" id="Q0VMA8"/>
<dbReference type="STRING" id="393595.ABO_2242"/>
<dbReference type="KEGG" id="abo:ABO_2242"/>
<dbReference type="eggNOG" id="COG0018">
    <property type="taxonomic scope" value="Bacteria"/>
</dbReference>
<dbReference type="HOGENOM" id="CLU_006406_5_1_6"/>
<dbReference type="OrthoDB" id="9803211at2"/>
<dbReference type="Proteomes" id="UP000008871">
    <property type="component" value="Chromosome"/>
</dbReference>
<dbReference type="GO" id="GO:0005737">
    <property type="term" value="C:cytoplasm"/>
    <property type="evidence" value="ECO:0007669"/>
    <property type="project" value="UniProtKB-SubCell"/>
</dbReference>
<dbReference type="GO" id="GO:0004814">
    <property type="term" value="F:arginine-tRNA ligase activity"/>
    <property type="evidence" value="ECO:0007669"/>
    <property type="project" value="UniProtKB-UniRule"/>
</dbReference>
<dbReference type="GO" id="GO:0005524">
    <property type="term" value="F:ATP binding"/>
    <property type="evidence" value="ECO:0007669"/>
    <property type="project" value="UniProtKB-UniRule"/>
</dbReference>
<dbReference type="GO" id="GO:0006420">
    <property type="term" value="P:arginyl-tRNA aminoacylation"/>
    <property type="evidence" value="ECO:0007669"/>
    <property type="project" value="UniProtKB-UniRule"/>
</dbReference>
<dbReference type="CDD" id="cd07956">
    <property type="entry name" value="Anticodon_Ia_Arg"/>
    <property type="match status" value="1"/>
</dbReference>
<dbReference type="CDD" id="cd00671">
    <property type="entry name" value="ArgRS_core"/>
    <property type="match status" value="1"/>
</dbReference>
<dbReference type="FunFam" id="1.10.730.10:FF:000001">
    <property type="entry name" value="Arginine--tRNA ligase"/>
    <property type="match status" value="1"/>
</dbReference>
<dbReference type="FunFam" id="3.30.1360.70:FF:000003">
    <property type="entry name" value="Arginine--tRNA ligase"/>
    <property type="match status" value="1"/>
</dbReference>
<dbReference type="FunFam" id="3.40.50.620:FF:000030">
    <property type="entry name" value="Arginine--tRNA ligase"/>
    <property type="match status" value="1"/>
</dbReference>
<dbReference type="Gene3D" id="3.30.1360.70">
    <property type="entry name" value="Arginyl tRNA synthetase N-terminal domain"/>
    <property type="match status" value="1"/>
</dbReference>
<dbReference type="Gene3D" id="3.40.50.620">
    <property type="entry name" value="HUPs"/>
    <property type="match status" value="1"/>
</dbReference>
<dbReference type="Gene3D" id="1.10.730.10">
    <property type="entry name" value="Isoleucyl-tRNA Synthetase, Domain 1"/>
    <property type="match status" value="1"/>
</dbReference>
<dbReference type="HAMAP" id="MF_00123">
    <property type="entry name" value="Arg_tRNA_synth"/>
    <property type="match status" value="1"/>
</dbReference>
<dbReference type="InterPro" id="IPR001412">
    <property type="entry name" value="aa-tRNA-synth_I_CS"/>
</dbReference>
<dbReference type="InterPro" id="IPR001278">
    <property type="entry name" value="Arg-tRNA-ligase"/>
</dbReference>
<dbReference type="InterPro" id="IPR005148">
    <property type="entry name" value="Arg-tRNA-synth_N"/>
</dbReference>
<dbReference type="InterPro" id="IPR036695">
    <property type="entry name" value="Arg-tRNA-synth_N_sf"/>
</dbReference>
<dbReference type="InterPro" id="IPR035684">
    <property type="entry name" value="ArgRS_core"/>
</dbReference>
<dbReference type="InterPro" id="IPR008909">
    <property type="entry name" value="DALR_anticod-bd"/>
</dbReference>
<dbReference type="InterPro" id="IPR014729">
    <property type="entry name" value="Rossmann-like_a/b/a_fold"/>
</dbReference>
<dbReference type="InterPro" id="IPR009080">
    <property type="entry name" value="tRNAsynth_Ia_anticodon-bd"/>
</dbReference>
<dbReference type="NCBIfam" id="TIGR00456">
    <property type="entry name" value="argS"/>
    <property type="match status" value="1"/>
</dbReference>
<dbReference type="PANTHER" id="PTHR11956:SF5">
    <property type="entry name" value="ARGININE--TRNA LIGASE, CYTOPLASMIC"/>
    <property type="match status" value="1"/>
</dbReference>
<dbReference type="PANTHER" id="PTHR11956">
    <property type="entry name" value="ARGINYL-TRNA SYNTHETASE"/>
    <property type="match status" value="1"/>
</dbReference>
<dbReference type="Pfam" id="PF03485">
    <property type="entry name" value="Arg_tRNA_synt_N"/>
    <property type="match status" value="1"/>
</dbReference>
<dbReference type="Pfam" id="PF05746">
    <property type="entry name" value="DALR_1"/>
    <property type="match status" value="1"/>
</dbReference>
<dbReference type="Pfam" id="PF00750">
    <property type="entry name" value="tRNA-synt_1d"/>
    <property type="match status" value="1"/>
</dbReference>
<dbReference type="PRINTS" id="PR01038">
    <property type="entry name" value="TRNASYNTHARG"/>
</dbReference>
<dbReference type="SMART" id="SM01016">
    <property type="entry name" value="Arg_tRNA_synt_N"/>
    <property type="match status" value="1"/>
</dbReference>
<dbReference type="SMART" id="SM00836">
    <property type="entry name" value="DALR_1"/>
    <property type="match status" value="1"/>
</dbReference>
<dbReference type="SUPFAM" id="SSF47323">
    <property type="entry name" value="Anticodon-binding domain of a subclass of class I aminoacyl-tRNA synthetases"/>
    <property type="match status" value="1"/>
</dbReference>
<dbReference type="SUPFAM" id="SSF55190">
    <property type="entry name" value="Arginyl-tRNA synthetase (ArgRS), N-terminal 'additional' domain"/>
    <property type="match status" value="1"/>
</dbReference>
<dbReference type="SUPFAM" id="SSF52374">
    <property type="entry name" value="Nucleotidylyl transferase"/>
    <property type="match status" value="1"/>
</dbReference>
<dbReference type="PROSITE" id="PS00178">
    <property type="entry name" value="AA_TRNA_LIGASE_I"/>
    <property type="match status" value="1"/>
</dbReference>